<dbReference type="EMBL" id="CP000828">
    <property type="protein sequence ID" value="ABW26284.1"/>
    <property type="molecule type" value="Genomic_DNA"/>
</dbReference>
<dbReference type="RefSeq" id="WP_012161829.1">
    <property type="nucleotide sequence ID" value="NC_009925.1"/>
</dbReference>
<dbReference type="SMR" id="B0C424"/>
<dbReference type="STRING" id="329726.AM1_1247"/>
<dbReference type="KEGG" id="amr:AM1_1247"/>
<dbReference type="eggNOG" id="COG0216">
    <property type="taxonomic scope" value="Bacteria"/>
</dbReference>
<dbReference type="HOGENOM" id="CLU_036856_0_1_3"/>
<dbReference type="OrthoDB" id="9806673at2"/>
<dbReference type="Proteomes" id="UP000000268">
    <property type="component" value="Chromosome"/>
</dbReference>
<dbReference type="GO" id="GO:0005737">
    <property type="term" value="C:cytoplasm"/>
    <property type="evidence" value="ECO:0007669"/>
    <property type="project" value="UniProtKB-SubCell"/>
</dbReference>
<dbReference type="GO" id="GO:0016149">
    <property type="term" value="F:translation release factor activity, codon specific"/>
    <property type="evidence" value="ECO:0007669"/>
    <property type="project" value="UniProtKB-UniRule"/>
</dbReference>
<dbReference type="FunFam" id="3.30.160.20:FF:000004">
    <property type="entry name" value="Peptide chain release factor 1"/>
    <property type="match status" value="1"/>
</dbReference>
<dbReference type="FunFam" id="3.30.70.1660:FF:000002">
    <property type="entry name" value="Peptide chain release factor 1"/>
    <property type="match status" value="1"/>
</dbReference>
<dbReference type="Gene3D" id="3.30.160.20">
    <property type="match status" value="1"/>
</dbReference>
<dbReference type="Gene3D" id="3.30.70.1660">
    <property type="match status" value="2"/>
</dbReference>
<dbReference type="Gene3D" id="6.10.140.1950">
    <property type="match status" value="1"/>
</dbReference>
<dbReference type="HAMAP" id="MF_00093">
    <property type="entry name" value="Rel_fac_1"/>
    <property type="match status" value="1"/>
</dbReference>
<dbReference type="InterPro" id="IPR005139">
    <property type="entry name" value="PCRF"/>
</dbReference>
<dbReference type="InterPro" id="IPR000352">
    <property type="entry name" value="Pep_chain_release_fac_I"/>
</dbReference>
<dbReference type="InterPro" id="IPR045853">
    <property type="entry name" value="Pep_chain_release_fac_I_sf"/>
</dbReference>
<dbReference type="InterPro" id="IPR050057">
    <property type="entry name" value="Prokaryotic/Mito_RF"/>
</dbReference>
<dbReference type="InterPro" id="IPR004373">
    <property type="entry name" value="RF-1"/>
</dbReference>
<dbReference type="NCBIfam" id="TIGR00019">
    <property type="entry name" value="prfA"/>
    <property type="match status" value="1"/>
</dbReference>
<dbReference type="NCBIfam" id="NF001859">
    <property type="entry name" value="PRK00591.1"/>
    <property type="match status" value="1"/>
</dbReference>
<dbReference type="PANTHER" id="PTHR43804">
    <property type="entry name" value="LD18447P"/>
    <property type="match status" value="1"/>
</dbReference>
<dbReference type="PANTHER" id="PTHR43804:SF8">
    <property type="entry name" value="PEPTIDE CHAIN RELEASE FACTOR APG3, CHLOROPLASTIC"/>
    <property type="match status" value="1"/>
</dbReference>
<dbReference type="Pfam" id="PF03462">
    <property type="entry name" value="PCRF"/>
    <property type="match status" value="1"/>
</dbReference>
<dbReference type="Pfam" id="PF00472">
    <property type="entry name" value="RF-1"/>
    <property type="match status" value="1"/>
</dbReference>
<dbReference type="SMART" id="SM00937">
    <property type="entry name" value="PCRF"/>
    <property type="match status" value="1"/>
</dbReference>
<dbReference type="SUPFAM" id="SSF75620">
    <property type="entry name" value="Release factor"/>
    <property type="match status" value="1"/>
</dbReference>
<dbReference type="PROSITE" id="PS00745">
    <property type="entry name" value="RF_PROK_I"/>
    <property type="match status" value="1"/>
</dbReference>
<sequence length="363" mass="40511">MAEAYLLEKLKSVEQTFHELTRRLGDPEVATNPTEFQEVAKARASLEETVNTFEDWKATQQELADAQQMAKDGDEDPELKEMAAMEAAELTEKLDGLETKLKVLLLPRDPNDEKNIMLEIRAGAGGDEASIWAGDLVRIYSKYAESQKWRVKLLSESGGEMGGFKEAILEIQGERVYSKLKYEAGVHRVQRVPATEASGRVHTSTATVAVMPEVDDVEIEIDPKDIEMSTARSGGAGGQNVNKVETAVDLVHKPTGIRIFCTEERSQLQNKERAMQILRAKLYEMELQEQQASVTSMRRSQVGTGARSEKIRTYNYKDNRATDHRLNQNFPLEKVLVGDIELILETCIAQDQQAQLADLAAAV</sequence>
<feature type="chain" id="PRO_1000075481" description="Peptide chain release factor 1">
    <location>
        <begin position="1"/>
        <end position="363"/>
    </location>
</feature>
<feature type="modified residue" description="N5-methylglutamine" evidence="1">
    <location>
        <position position="239"/>
    </location>
</feature>
<accession>B0C424</accession>
<evidence type="ECO:0000255" key="1">
    <source>
        <dbReference type="HAMAP-Rule" id="MF_00093"/>
    </source>
</evidence>
<keyword id="KW-0963">Cytoplasm</keyword>
<keyword id="KW-0488">Methylation</keyword>
<keyword id="KW-0648">Protein biosynthesis</keyword>
<keyword id="KW-1185">Reference proteome</keyword>
<organism>
    <name type="scientific">Acaryochloris marina (strain MBIC 11017)</name>
    <dbReference type="NCBI Taxonomy" id="329726"/>
    <lineage>
        <taxon>Bacteria</taxon>
        <taxon>Bacillati</taxon>
        <taxon>Cyanobacteriota</taxon>
        <taxon>Cyanophyceae</taxon>
        <taxon>Acaryochloridales</taxon>
        <taxon>Acaryochloridaceae</taxon>
        <taxon>Acaryochloris</taxon>
    </lineage>
</organism>
<comment type="function">
    <text evidence="1">Peptide chain release factor 1 directs the termination of translation in response to the peptide chain termination codons UAG and UAA.</text>
</comment>
<comment type="subcellular location">
    <subcellularLocation>
        <location evidence="1">Cytoplasm</location>
    </subcellularLocation>
</comment>
<comment type="PTM">
    <text evidence="1">Methylated by PrmC. Methylation increases the termination efficiency of RF1.</text>
</comment>
<comment type="similarity">
    <text evidence="1">Belongs to the prokaryotic/mitochondrial release factor family.</text>
</comment>
<reference key="1">
    <citation type="journal article" date="2008" name="Proc. Natl. Acad. Sci. U.S.A.">
        <title>Niche adaptation and genome expansion in the chlorophyll d-producing cyanobacterium Acaryochloris marina.</title>
        <authorList>
            <person name="Swingley W.D."/>
            <person name="Chen M."/>
            <person name="Cheung P.C."/>
            <person name="Conrad A.L."/>
            <person name="Dejesa L.C."/>
            <person name="Hao J."/>
            <person name="Honchak B.M."/>
            <person name="Karbach L.E."/>
            <person name="Kurdoglu A."/>
            <person name="Lahiri S."/>
            <person name="Mastrian S.D."/>
            <person name="Miyashita H."/>
            <person name="Page L."/>
            <person name="Ramakrishna P."/>
            <person name="Satoh S."/>
            <person name="Sattley W.M."/>
            <person name="Shimada Y."/>
            <person name="Taylor H.L."/>
            <person name="Tomo T."/>
            <person name="Tsuchiya T."/>
            <person name="Wang Z.T."/>
            <person name="Raymond J."/>
            <person name="Mimuro M."/>
            <person name="Blankenship R.E."/>
            <person name="Touchman J.W."/>
        </authorList>
    </citation>
    <scope>NUCLEOTIDE SEQUENCE [LARGE SCALE GENOMIC DNA]</scope>
    <source>
        <strain>MBIC 11017</strain>
    </source>
</reference>
<name>RF1_ACAM1</name>
<gene>
    <name evidence="1" type="primary">prfA</name>
    <name type="ordered locus">AM1_1247</name>
</gene>
<protein>
    <recommendedName>
        <fullName evidence="1">Peptide chain release factor 1</fullName>
        <shortName evidence="1">RF-1</shortName>
    </recommendedName>
</protein>
<proteinExistence type="inferred from homology"/>